<accession>B1JFJ3</accession>
<comment type="function">
    <text evidence="1">Necessary for normal cell division and for the maintenance of normal septation.</text>
</comment>
<comment type="cofactor">
    <cofactor evidence="1">
        <name>Mg(2+)</name>
        <dbReference type="ChEBI" id="CHEBI:18420"/>
    </cofactor>
</comment>
<comment type="similarity">
    <text evidence="1">Belongs to the TRAFAC class TrmE-Era-EngA-EngB-Septin-like GTPase superfamily. EngB GTPase family.</text>
</comment>
<sequence>MQVKNPILGLCQKATFALSAAKVEQCPDDQGYEVAFAGRSNAGKSSALNTLTHASLARTSKTPGRTQLLNFFSLDDERRLVDLPGYGYAKVPIPLKQHWQRHLEAYLGSRECLRGVILMMDVRHPMTDFDKMMLDWARASGMPMHILLTKADKLTHGAGKNTLLKVQSEIRKGWGDGVTIQLFSAPKRLGLEEAYKVLAGWMELEDKPVA</sequence>
<name>ENGB_PSEPW</name>
<protein>
    <recommendedName>
        <fullName evidence="1">Probable GTP-binding protein EngB</fullName>
    </recommendedName>
</protein>
<proteinExistence type="inferred from homology"/>
<reference key="1">
    <citation type="submission" date="2008-02" db="EMBL/GenBank/DDBJ databases">
        <title>Complete sequence of Pseudomonas putida W619.</title>
        <authorList>
            <person name="Copeland A."/>
            <person name="Lucas S."/>
            <person name="Lapidus A."/>
            <person name="Barry K."/>
            <person name="Detter J.C."/>
            <person name="Glavina del Rio T."/>
            <person name="Dalin E."/>
            <person name="Tice H."/>
            <person name="Pitluck S."/>
            <person name="Chain P."/>
            <person name="Malfatti S."/>
            <person name="Shin M."/>
            <person name="Vergez L."/>
            <person name="Schmutz J."/>
            <person name="Larimer F."/>
            <person name="Land M."/>
            <person name="Hauser L."/>
            <person name="Kyrpides N."/>
            <person name="Kim E."/>
            <person name="Taghavi S."/>
            <person name="Vangronsveld D."/>
            <person name="van der Lelie D."/>
            <person name="Richardson P."/>
        </authorList>
    </citation>
    <scope>NUCLEOTIDE SEQUENCE [LARGE SCALE GENOMIC DNA]</scope>
    <source>
        <strain>W619</strain>
    </source>
</reference>
<feature type="chain" id="PRO_1000115995" description="Probable GTP-binding protein EngB">
    <location>
        <begin position="1"/>
        <end position="210"/>
    </location>
</feature>
<feature type="domain" description="EngB-type G" evidence="1">
    <location>
        <begin position="30"/>
        <end position="204"/>
    </location>
</feature>
<feature type="binding site" evidence="1">
    <location>
        <begin position="38"/>
        <end position="45"/>
    </location>
    <ligand>
        <name>GTP</name>
        <dbReference type="ChEBI" id="CHEBI:37565"/>
    </ligand>
</feature>
<feature type="binding site" evidence="1">
    <location>
        <position position="45"/>
    </location>
    <ligand>
        <name>Mg(2+)</name>
        <dbReference type="ChEBI" id="CHEBI:18420"/>
    </ligand>
</feature>
<feature type="binding site" evidence="1">
    <location>
        <begin position="64"/>
        <end position="68"/>
    </location>
    <ligand>
        <name>GTP</name>
        <dbReference type="ChEBI" id="CHEBI:37565"/>
    </ligand>
</feature>
<feature type="binding site" evidence="1">
    <location>
        <position position="66"/>
    </location>
    <ligand>
        <name>Mg(2+)</name>
        <dbReference type="ChEBI" id="CHEBI:18420"/>
    </ligand>
</feature>
<feature type="binding site" evidence="1">
    <location>
        <begin position="82"/>
        <end position="85"/>
    </location>
    <ligand>
        <name>GTP</name>
        <dbReference type="ChEBI" id="CHEBI:37565"/>
    </ligand>
</feature>
<feature type="binding site" evidence="1">
    <location>
        <begin position="149"/>
        <end position="152"/>
    </location>
    <ligand>
        <name>GTP</name>
        <dbReference type="ChEBI" id="CHEBI:37565"/>
    </ligand>
</feature>
<feature type="binding site" evidence="1">
    <location>
        <begin position="182"/>
        <end position="185"/>
    </location>
    <ligand>
        <name>GTP</name>
        <dbReference type="ChEBI" id="CHEBI:37565"/>
    </ligand>
</feature>
<gene>
    <name evidence="1" type="primary">engB</name>
    <name type="ordered locus">PputW619_5104</name>
</gene>
<keyword id="KW-0131">Cell cycle</keyword>
<keyword id="KW-0132">Cell division</keyword>
<keyword id="KW-0342">GTP-binding</keyword>
<keyword id="KW-0460">Magnesium</keyword>
<keyword id="KW-0479">Metal-binding</keyword>
<keyword id="KW-0547">Nucleotide-binding</keyword>
<keyword id="KW-0717">Septation</keyword>
<evidence type="ECO:0000255" key="1">
    <source>
        <dbReference type="HAMAP-Rule" id="MF_00321"/>
    </source>
</evidence>
<organism>
    <name type="scientific">Pseudomonas putida (strain W619)</name>
    <dbReference type="NCBI Taxonomy" id="390235"/>
    <lineage>
        <taxon>Bacteria</taxon>
        <taxon>Pseudomonadati</taxon>
        <taxon>Pseudomonadota</taxon>
        <taxon>Gammaproteobacteria</taxon>
        <taxon>Pseudomonadales</taxon>
        <taxon>Pseudomonadaceae</taxon>
        <taxon>Pseudomonas</taxon>
    </lineage>
</organism>
<dbReference type="EMBL" id="CP000949">
    <property type="protein sequence ID" value="ACA75580.1"/>
    <property type="molecule type" value="Genomic_DNA"/>
</dbReference>
<dbReference type="SMR" id="B1JFJ3"/>
<dbReference type="STRING" id="390235.PputW619_5104"/>
<dbReference type="KEGG" id="ppw:PputW619_5104"/>
<dbReference type="eggNOG" id="COG0218">
    <property type="taxonomic scope" value="Bacteria"/>
</dbReference>
<dbReference type="HOGENOM" id="CLU_033732_1_0_6"/>
<dbReference type="OrthoDB" id="9804921at2"/>
<dbReference type="GO" id="GO:0005829">
    <property type="term" value="C:cytosol"/>
    <property type="evidence" value="ECO:0007669"/>
    <property type="project" value="TreeGrafter"/>
</dbReference>
<dbReference type="GO" id="GO:0005525">
    <property type="term" value="F:GTP binding"/>
    <property type="evidence" value="ECO:0007669"/>
    <property type="project" value="UniProtKB-UniRule"/>
</dbReference>
<dbReference type="GO" id="GO:0046872">
    <property type="term" value="F:metal ion binding"/>
    <property type="evidence" value="ECO:0007669"/>
    <property type="project" value="UniProtKB-KW"/>
</dbReference>
<dbReference type="GO" id="GO:0000917">
    <property type="term" value="P:division septum assembly"/>
    <property type="evidence" value="ECO:0007669"/>
    <property type="project" value="UniProtKB-KW"/>
</dbReference>
<dbReference type="CDD" id="cd01876">
    <property type="entry name" value="YihA_EngB"/>
    <property type="match status" value="1"/>
</dbReference>
<dbReference type="FunFam" id="3.40.50.300:FF:000098">
    <property type="entry name" value="Probable GTP-binding protein EngB"/>
    <property type="match status" value="1"/>
</dbReference>
<dbReference type="Gene3D" id="3.40.50.300">
    <property type="entry name" value="P-loop containing nucleotide triphosphate hydrolases"/>
    <property type="match status" value="1"/>
</dbReference>
<dbReference type="HAMAP" id="MF_00321">
    <property type="entry name" value="GTPase_EngB"/>
    <property type="match status" value="1"/>
</dbReference>
<dbReference type="InterPro" id="IPR030393">
    <property type="entry name" value="G_ENGB_dom"/>
</dbReference>
<dbReference type="InterPro" id="IPR006073">
    <property type="entry name" value="GTP-bd"/>
</dbReference>
<dbReference type="InterPro" id="IPR019987">
    <property type="entry name" value="GTP-bd_ribosome_bio_YsxC"/>
</dbReference>
<dbReference type="InterPro" id="IPR027417">
    <property type="entry name" value="P-loop_NTPase"/>
</dbReference>
<dbReference type="NCBIfam" id="TIGR03598">
    <property type="entry name" value="GTPase_YsxC"/>
    <property type="match status" value="1"/>
</dbReference>
<dbReference type="PANTHER" id="PTHR11649:SF13">
    <property type="entry name" value="ENGB-TYPE G DOMAIN-CONTAINING PROTEIN"/>
    <property type="match status" value="1"/>
</dbReference>
<dbReference type="PANTHER" id="PTHR11649">
    <property type="entry name" value="MSS1/TRME-RELATED GTP-BINDING PROTEIN"/>
    <property type="match status" value="1"/>
</dbReference>
<dbReference type="Pfam" id="PF01926">
    <property type="entry name" value="MMR_HSR1"/>
    <property type="match status" value="1"/>
</dbReference>
<dbReference type="SUPFAM" id="SSF52540">
    <property type="entry name" value="P-loop containing nucleoside triphosphate hydrolases"/>
    <property type="match status" value="1"/>
</dbReference>
<dbReference type="PROSITE" id="PS51706">
    <property type="entry name" value="G_ENGB"/>
    <property type="match status" value="1"/>
</dbReference>